<name>DNAK_SOLM1</name>
<proteinExistence type="inferred from homology"/>
<organism>
    <name type="scientific">Solidesulfovibrio magneticus (strain ATCC 700980 / DSM 13731 / RS-1)</name>
    <name type="common">Desulfovibrio magneticus</name>
    <dbReference type="NCBI Taxonomy" id="573370"/>
    <lineage>
        <taxon>Bacteria</taxon>
        <taxon>Pseudomonadati</taxon>
        <taxon>Thermodesulfobacteriota</taxon>
        <taxon>Desulfovibrionia</taxon>
        <taxon>Desulfovibrionales</taxon>
        <taxon>Desulfovibrionaceae</taxon>
        <taxon>Solidesulfovibrio</taxon>
    </lineage>
</organism>
<accession>C4XQ63</accession>
<reference key="1">
    <citation type="journal article" date="2009" name="Genome Res.">
        <title>Whole genome sequence of Desulfovibrio magneticus strain RS-1 revealed common gene clusters in magnetotactic bacteria.</title>
        <authorList>
            <person name="Nakazawa H."/>
            <person name="Arakaki A."/>
            <person name="Narita-Yamada S."/>
            <person name="Yashiro I."/>
            <person name="Jinno K."/>
            <person name="Aoki N."/>
            <person name="Tsuruyama A."/>
            <person name="Okamura Y."/>
            <person name="Tanikawa S."/>
            <person name="Fujita N."/>
            <person name="Takeyama H."/>
            <person name="Matsunaga T."/>
        </authorList>
    </citation>
    <scope>NUCLEOTIDE SEQUENCE [LARGE SCALE GENOMIC DNA]</scope>
    <source>
        <strain>ATCC 700980 / DSM 13731 / RS-1</strain>
    </source>
</reference>
<sequence>MGKIIGIDLGTTNSCVYVMEGKDPKCVTNPEGGRTTPSIVAFTKERLVGEIAKRQAVTNPERTIFAIKRLMGRRYDAPEVKHWLEHCPYKIVEGQGGDAYVEVEGKKYSPAEISAIILGKLKKDAEAYLGEPVTEAVITVPAYFNDAQRQATKDAGRIAGLEVKRIINEPTAASLAYGFDKKANEKIAVFDLGGGTFDISILEVGDNVVEVRATNGDTFLGGEDFDHRVISYLVDEFKKENGIDLSQDRMALQRLKEAGEKAKKELSTAMETEVNLPFITADASGPKHMMVKITRGKLESLVDDLVKRTVEPCRKALADAGLKASDIDEVVLVGGMTRMPLVSKTVQEFFGKEPNRSVNPDEVVAMGAAIQGGILAGDVKDVLLLDVTPLSLGIETLGGVFTKLIERNTTIPTRKSQVFTTAADNQPSVSIHVLQGERPMANDNMTLGRFELTGLPPAARGIPQIEVTFDIDANGIVNVSAKDTGTGKEQSIRITASSGLSEADIQKLIKDAESHAEDDKKKQALIEIRNQADTLVYTTEKSLAELGEKIDGVTRGEIEAKLNNVKETLKGEDADAIKRATDDLSQASHKLAEKLYQQKAEEGGQPGGPQAGAAGGQPGAKAGGDDDVVDADYTEVK</sequence>
<protein>
    <recommendedName>
        <fullName evidence="1">Chaperone protein DnaK</fullName>
    </recommendedName>
    <alternativeName>
        <fullName evidence="1">HSP70</fullName>
    </alternativeName>
    <alternativeName>
        <fullName evidence="1">Heat shock 70 kDa protein</fullName>
    </alternativeName>
    <alternativeName>
        <fullName evidence="1">Heat shock protein 70</fullName>
    </alternativeName>
</protein>
<keyword id="KW-0067">ATP-binding</keyword>
<keyword id="KW-0143">Chaperone</keyword>
<keyword id="KW-0547">Nucleotide-binding</keyword>
<keyword id="KW-0597">Phosphoprotein</keyword>
<keyword id="KW-0346">Stress response</keyword>
<feature type="chain" id="PRO_1000205185" description="Chaperone protein DnaK">
    <location>
        <begin position="1"/>
        <end position="637"/>
    </location>
</feature>
<feature type="region of interest" description="Disordered" evidence="2">
    <location>
        <begin position="593"/>
        <end position="637"/>
    </location>
</feature>
<feature type="compositionally biased region" description="Gly residues" evidence="2">
    <location>
        <begin position="604"/>
        <end position="622"/>
    </location>
</feature>
<feature type="compositionally biased region" description="Acidic residues" evidence="2">
    <location>
        <begin position="625"/>
        <end position="637"/>
    </location>
</feature>
<feature type="modified residue" description="Phosphothreonine; by autocatalysis" evidence="1">
    <location>
        <position position="196"/>
    </location>
</feature>
<comment type="function">
    <text evidence="1">Acts as a chaperone.</text>
</comment>
<comment type="induction">
    <text evidence="1">By stress conditions e.g. heat shock.</text>
</comment>
<comment type="similarity">
    <text evidence="1">Belongs to the heat shock protein 70 family.</text>
</comment>
<evidence type="ECO:0000255" key="1">
    <source>
        <dbReference type="HAMAP-Rule" id="MF_00332"/>
    </source>
</evidence>
<evidence type="ECO:0000256" key="2">
    <source>
        <dbReference type="SAM" id="MobiDB-lite"/>
    </source>
</evidence>
<dbReference type="EMBL" id="AP010904">
    <property type="protein sequence ID" value="BAH75228.1"/>
    <property type="molecule type" value="Genomic_DNA"/>
</dbReference>
<dbReference type="RefSeq" id="WP_015860427.1">
    <property type="nucleotide sequence ID" value="NC_012796.1"/>
</dbReference>
<dbReference type="SMR" id="C4XQ63"/>
<dbReference type="STRING" id="573370.DMR_17370"/>
<dbReference type="KEGG" id="dma:DMR_17370"/>
<dbReference type="eggNOG" id="COG0443">
    <property type="taxonomic scope" value="Bacteria"/>
</dbReference>
<dbReference type="HOGENOM" id="CLU_005965_2_4_7"/>
<dbReference type="OrthoDB" id="9766019at2"/>
<dbReference type="Proteomes" id="UP000009071">
    <property type="component" value="Chromosome"/>
</dbReference>
<dbReference type="GO" id="GO:0005524">
    <property type="term" value="F:ATP binding"/>
    <property type="evidence" value="ECO:0007669"/>
    <property type="project" value="UniProtKB-UniRule"/>
</dbReference>
<dbReference type="GO" id="GO:0140662">
    <property type="term" value="F:ATP-dependent protein folding chaperone"/>
    <property type="evidence" value="ECO:0007669"/>
    <property type="project" value="InterPro"/>
</dbReference>
<dbReference type="GO" id="GO:0051082">
    <property type="term" value="F:unfolded protein binding"/>
    <property type="evidence" value="ECO:0007669"/>
    <property type="project" value="InterPro"/>
</dbReference>
<dbReference type="CDD" id="cd10234">
    <property type="entry name" value="ASKHA_NBD_HSP70_DnaK-like"/>
    <property type="match status" value="1"/>
</dbReference>
<dbReference type="FunFam" id="2.60.34.10:FF:000014">
    <property type="entry name" value="Chaperone protein DnaK HSP70"/>
    <property type="match status" value="1"/>
</dbReference>
<dbReference type="FunFam" id="3.30.30.30:FF:000003">
    <property type="entry name" value="Heat shock protein 9"/>
    <property type="match status" value="1"/>
</dbReference>
<dbReference type="FunFam" id="1.20.1270.10:FF:000001">
    <property type="entry name" value="Molecular chaperone DnaK"/>
    <property type="match status" value="1"/>
</dbReference>
<dbReference type="FunFam" id="3.30.420.40:FF:000004">
    <property type="entry name" value="Molecular chaperone DnaK"/>
    <property type="match status" value="1"/>
</dbReference>
<dbReference type="FunFam" id="3.90.640.10:FF:000003">
    <property type="entry name" value="Molecular chaperone DnaK"/>
    <property type="match status" value="1"/>
</dbReference>
<dbReference type="Gene3D" id="1.20.1270.10">
    <property type="match status" value="1"/>
</dbReference>
<dbReference type="Gene3D" id="3.30.420.40">
    <property type="match status" value="2"/>
</dbReference>
<dbReference type="Gene3D" id="3.90.640.10">
    <property type="entry name" value="Actin, Chain A, domain 4"/>
    <property type="match status" value="1"/>
</dbReference>
<dbReference type="Gene3D" id="2.60.34.10">
    <property type="entry name" value="Substrate Binding Domain Of DNAk, Chain A, domain 1"/>
    <property type="match status" value="1"/>
</dbReference>
<dbReference type="HAMAP" id="MF_00332">
    <property type="entry name" value="DnaK"/>
    <property type="match status" value="1"/>
</dbReference>
<dbReference type="InterPro" id="IPR043129">
    <property type="entry name" value="ATPase_NBD"/>
</dbReference>
<dbReference type="InterPro" id="IPR012725">
    <property type="entry name" value="Chaperone_DnaK"/>
</dbReference>
<dbReference type="InterPro" id="IPR018181">
    <property type="entry name" value="Heat_shock_70_CS"/>
</dbReference>
<dbReference type="InterPro" id="IPR029048">
    <property type="entry name" value="HSP70_C_sf"/>
</dbReference>
<dbReference type="InterPro" id="IPR029047">
    <property type="entry name" value="HSP70_peptide-bd_sf"/>
</dbReference>
<dbReference type="InterPro" id="IPR013126">
    <property type="entry name" value="Hsp_70_fam"/>
</dbReference>
<dbReference type="NCBIfam" id="NF001413">
    <property type="entry name" value="PRK00290.1"/>
    <property type="match status" value="1"/>
</dbReference>
<dbReference type="NCBIfam" id="NF003520">
    <property type="entry name" value="PRK05183.1"/>
    <property type="match status" value="1"/>
</dbReference>
<dbReference type="NCBIfam" id="TIGR02350">
    <property type="entry name" value="prok_dnaK"/>
    <property type="match status" value="1"/>
</dbReference>
<dbReference type="PANTHER" id="PTHR19375">
    <property type="entry name" value="HEAT SHOCK PROTEIN 70KDA"/>
    <property type="match status" value="1"/>
</dbReference>
<dbReference type="Pfam" id="PF00012">
    <property type="entry name" value="HSP70"/>
    <property type="match status" value="1"/>
</dbReference>
<dbReference type="PRINTS" id="PR00301">
    <property type="entry name" value="HEATSHOCK70"/>
</dbReference>
<dbReference type="SUPFAM" id="SSF53067">
    <property type="entry name" value="Actin-like ATPase domain"/>
    <property type="match status" value="2"/>
</dbReference>
<dbReference type="SUPFAM" id="SSF100934">
    <property type="entry name" value="Heat shock protein 70kD (HSP70), C-terminal subdomain"/>
    <property type="match status" value="1"/>
</dbReference>
<dbReference type="SUPFAM" id="SSF100920">
    <property type="entry name" value="Heat shock protein 70kD (HSP70), peptide-binding domain"/>
    <property type="match status" value="1"/>
</dbReference>
<dbReference type="PROSITE" id="PS00297">
    <property type="entry name" value="HSP70_1"/>
    <property type="match status" value="1"/>
</dbReference>
<dbReference type="PROSITE" id="PS00329">
    <property type="entry name" value="HSP70_2"/>
    <property type="match status" value="1"/>
</dbReference>
<dbReference type="PROSITE" id="PS01036">
    <property type="entry name" value="HSP70_3"/>
    <property type="match status" value="1"/>
</dbReference>
<gene>
    <name evidence="1" type="primary">dnaK</name>
    <name type="ordered locus">DMR_17370</name>
</gene>